<feature type="chain" id="PRO_1000199180" description="Leucine--tRNA ligase">
    <location>
        <begin position="1"/>
        <end position="802"/>
    </location>
</feature>
<feature type="short sequence motif" description="'HIGH' region">
    <location>
        <begin position="40"/>
        <end position="51"/>
    </location>
</feature>
<feature type="short sequence motif" description="'KMSKS' region">
    <location>
        <begin position="576"/>
        <end position="580"/>
    </location>
</feature>
<feature type="binding site" evidence="1">
    <location>
        <position position="579"/>
    </location>
    <ligand>
        <name>ATP</name>
        <dbReference type="ChEBI" id="CHEBI:30616"/>
    </ligand>
</feature>
<keyword id="KW-0030">Aminoacyl-tRNA synthetase</keyword>
<keyword id="KW-0067">ATP-binding</keyword>
<keyword id="KW-0963">Cytoplasm</keyword>
<keyword id="KW-0436">Ligase</keyword>
<keyword id="KW-0547">Nucleotide-binding</keyword>
<keyword id="KW-0648">Protein biosynthesis</keyword>
<accession>B9J1E1</accession>
<dbReference type="EC" id="6.1.1.4" evidence="1"/>
<dbReference type="EMBL" id="CP000227">
    <property type="protein sequence ID" value="ACM14979.1"/>
    <property type="molecule type" value="Genomic_DNA"/>
</dbReference>
<dbReference type="SMR" id="B9J1E1"/>
<dbReference type="KEGG" id="bcq:BCQ_4553"/>
<dbReference type="HOGENOM" id="CLU_004427_0_0_9"/>
<dbReference type="Proteomes" id="UP000000441">
    <property type="component" value="Chromosome"/>
</dbReference>
<dbReference type="GO" id="GO:0005829">
    <property type="term" value="C:cytosol"/>
    <property type="evidence" value="ECO:0007669"/>
    <property type="project" value="TreeGrafter"/>
</dbReference>
<dbReference type="GO" id="GO:0002161">
    <property type="term" value="F:aminoacyl-tRNA deacylase activity"/>
    <property type="evidence" value="ECO:0007669"/>
    <property type="project" value="InterPro"/>
</dbReference>
<dbReference type="GO" id="GO:0005524">
    <property type="term" value="F:ATP binding"/>
    <property type="evidence" value="ECO:0007669"/>
    <property type="project" value="UniProtKB-UniRule"/>
</dbReference>
<dbReference type="GO" id="GO:0004823">
    <property type="term" value="F:leucine-tRNA ligase activity"/>
    <property type="evidence" value="ECO:0007669"/>
    <property type="project" value="UniProtKB-UniRule"/>
</dbReference>
<dbReference type="GO" id="GO:0006429">
    <property type="term" value="P:leucyl-tRNA aminoacylation"/>
    <property type="evidence" value="ECO:0007669"/>
    <property type="project" value="UniProtKB-UniRule"/>
</dbReference>
<dbReference type="CDD" id="cd07958">
    <property type="entry name" value="Anticodon_Ia_Leu_BEm"/>
    <property type="match status" value="1"/>
</dbReference>
<dbReference type="CDD" id="cd00812">
    <property type="entry name" value="LeuRS_core"/>
    <property type="match status" value="1"/>
</dbReference>
<dbReference type="FunFam" id="1.10.730.10:FF:000012">
    <property type="entry name" value="Leucine--tRNA ligase"/>
    <property type="match status" value="1"/>
</dbReference>
<dbReference type="FunFam" id="1.10.730.10:FF:000018">
    <property type="entry name" value="Leucine--tRNA ligase"/>
    <property type="match status" value="1"/>
</dbReference>
<dbReference type="FunFam" id="3.10.20.590:FF:000001">
    <property type="entry name" value="Leucine--tRNA ligase"/>
    <property type="match status" value="1"/>
</dbReference>
<dbReference type="FunFam" id="3.40.50.620:FF:000056">
    <property type="entry name" value="Leucine--tRNA ligase"/>
    <property type="match status" value="1"/>
</dbReference>
<dbReference type="FunFam" id="3.40.50.620:FF:000077">
    <property type="entry name" value="Leucine--tRNA ligase"/>
    <property type="match status" value="1"/>
</dbReference>
<dbReference type="Gene3D" id="3.10.20.590">
    <property type="match status" value="1"/>
</dbReference>
<dbReference type="Gene3D" id="3.40.50.620">
    <property type="entry name" value="HUPs"/>
    <property type="match status" value="2"/>
</dbReference>
<dbReference type="Gene3D" id="1.10.730.10">
    <property type="entry name" value="Isoleucyl-tRNA Synthetase, Domain 1"/>
    <property type="match status" value="1"/>
</dbReference>
<dbReference type="HAMAP" id="MF_00049_B">
    <property type="entry name" value="Leu_tRNA_synth_B"/>
    <property type="match status" value="1"/>
</dbReference>
<dbReference type="InterPro" id="IPR001412">
    <property type="entry name" value="aa-tRNA-synth_I_CS"/>
</dbReference>
<dbReference type="InterPro" id="IPR002300">
    <property type="entry name" value="aa-tRNA-synth_Ia"/>
</dbReference>
<dbReference type="InterPro" id="IPR002302">
    <property type="entry name" value="Leu-tRNA-ligase"/>
</dbReference>
<dbReference type="InterPro" id="IPR025709">
    <property type="entry name" value="Leu_tRNA-synth_edit"/>
</dbReference>
<dbReference type="InterPro" id="IPR013155">
    <property type="entry name" value="M/V/L/I-tRNA-synth_anticd-bd"/>
</dbReference>
<dbReference type="InterPro" id="IPR015413">
    <property type="entry name" value="Methionyl/Leucyl_tRNA_Synth"/>
</dbReference>
<dbReference type="InterPro" id="IPR014729">
    <property type="entry name" value="Rossmann-like_a/b/a_fold"/>
</dbReference>
<dbReference type="InterPro" id="IPR009080">
    <property type="entry name" value="tRNAsynth_Ia_anticodon-bd"/>
</dbReference>
<dbReference type="InterPro" id="IPR009008">
    <property type="entry name" value="Val/Leu/Ile-tRNA-synth_edit"/>
</dbReference>
<dbReference type="NCBIfam" id="TIGR00396">
    <property type="entry name" value="leuS_bact"/>
    <property type="match status" value="1"/>
</dbReference>
<dbReference type="PANTHER" id="PTHR43740:SF2">
    <property type="entry name" value="LEUCINE--TRNA LIGASE, MITOCHONDRIAL"/>
    <property type="match status" value="1"/>
</dbReference>
<dbReference type="PANTHER" id="PTHR43740">
    <property type="entry name" value="LEUCYL-TRNA SYNTHETASE"/>
    <property type="match status" value="1"/>
</dbReference>
<dbReference type="Pfam" id="PF08264">
    <property type="entry name" value="Anticodon_1"/>
    <property type="match status" value="1"/>
</dbReference>
<dbReference type="Pfam" id="PF00133">
    <property type="entry name" value="tRNA-synt_1"/>
    <property type="match status" value="1"/>
</dbReference>
<dbReference type="Pfam" id="PF13603">
    <property type="entry name" value="tRNA-synt_1_2"/>
    <property type="match status" value="1"/>
</dbReference>
<dbReference type="Pfam" id="PF09334">
    <property type="entry name" value="tRNA-synt_1g"/>
    <property type="match status" value="1"/>
</dbReference>
<dbReference type="PRINTS" id="PR00985">
    <property type="entry name" value="TRNASYNTHLEU"/>
</dbReference>
<dbReference type="SUPFAM" id="SSF47323">
    <property type="entry name" value="Anticodon-binding domain of a subclass of class I aminoacyl-tRNA synthetases"/>
    <property type="match status" value="1"/>
</dbReference>
<dbReference type="SUPFAM" id="SSF52374">
    <property type="entry name" value="Nucleotidylyl transferase"/>
    <property type="match status" value="1"/>
</dbReference>
<dbReference type="SUPFAM" id="SSF50677">
    <property type="entry name" value="ValRS/IleRS/LeuRS editing domain"/>
    <property type="match status" value="1"/>
</dbReference>
<dbReference type="PROSITE" id="PS00178">
    <property type="entry name" value="AA_TRNA_LIGASE_I"/>
    <property type="match status" value="1"/>
</dbReference>
<organism>
    <name type="scientific">Bacillus cereus (strain Q1)</name>
    <dbReference type="NCBI Taxonomy" id="361100"/>
    <lineage>
        <taxon>Bacteria</taxon>
        <taxon>Bacillati</taxon>
        <taxon>Bacillota</taxon>
        <taxon>Bacilli</taxon>
        <taxon>Bacillales</taxon>
        <taxon>Bacillaceae</taxon>
        <taxon>Bacillus</taxon>
        <taxon>Bacillus cereus group</taxon>
    </lineage>
</organism>
<proteinExistence type="inferred from homology"/>
<comment type="catalytic activity">
    <reaction evidence="1">
        <text>tRNA(Leu) + L-leucine + ATP = L-leucyl-tRNA(Leu) + AMP + diphosphate</text>
        <dbReference type="Rhea" id="RHEA:11688"/>
        <dbReference type="Rhea" id="RHEA-COMP:9613"/>
        <dbReference type="Rhea" id="RHEA-COMP:9622"/>
        <dbReference type="ChEBI" id="CHEBI:30616"/>
        <dbReference type="ChEBI" id="CHEBI:33019"/>
        <dbReference type="ChEBI" id="CHEBI:57427"/>
        <dbReference type="ChEBI" id="CHEBI:78442"/>
        <dbReference type="ChEBI" id="CHEBI:78494"/>
        <dbReference type="ChEBI" id="CHEBI:456215"/>
        <dbReference type="EC" id="6.1.1.4"/>
    </reaction>
</comment>
<comment type="subcellular location">
    <subcellularLocation>
        <location evidence="1">Cytoplasm</location>
    </subcellularLocation>
</comment>
<comment type="similarity">
    <text evidence="1">Belongs to the class-I aminoacyl-tRNA synthetase family.</text>
</comment>
<reference key="1">
    <citation type="journal article" date="2009" name="J. Bacteriol.">
        <title>Complete genome sequence of the extremophilic Bacillus cereus strain Q1 with industrial applications.</title>
        <authorList>
            <person name="Xiong Z."/>
            <person name="Jiang Y."/>
            <person name="Qi D."/>
            <person name="Lu H."/>
            <person name="Yang F."/>
            <person name="Yang J."/>
            <person name="Chen L."/>
            <person name="Sun L."/>
            <person name="Xu X."/>
            <person name="Xue Y."/>
            <person name="Zhu Y."/>
            <person name="Jin Q."/>
        </authorList>
    </citation>
    <scope>NUCLEOTIDE SEQUENCE [LARGE SCALE GENOMIC DNA]</scope>
    <source>
        <strain>Q1</strain>
    </source>
</reference>
<name>SYL_BACCQ</name>
<protein>
    <recommendedName>
        <fullName evidence="1">Leucine--tRNA ligase</fullName>
        <ecNumber evidence="1">6.1.1.4</ecNumber>
    </recommendedName>
    <alternativeName>
        <fullName evidence="1">Leucyl-tRNA synthetase</fullName>
        <shortName evidence="1">LeuRS</shortName>
    </alternativeName>
</protein>
<evidence type="ECO:0000255" key="1">
    <source>
        <dbReference type="HAMAP-Rule" id="MF_00049"/>
    </source>
</evidence>
<gene>
    <name evidence="1" type="primary">leuS</name>
    <name type="ordered locus">BCQ_4553</name>
</gene>
<sequence>MSFNHQEIEKKWQGYWEENKTFRTPDETEKPKFYALDMFPYPSGAGLHVGHPEGYTATDILSRMKRMQGYNVLHPMGWDAFGLPAEQYALDTGNSPAEFTEHNINTFRNQIKSLGFSYDWDREVNTTDPNYYKWTQWIFLKLFEKGLAYVDEVPVNWCPALGTVLANEEIIDGKSERGGHPVERRPMRQWMLKITAYGDRLLEDLDELDWPESLKDMQRNWIGRSEGAEVHFNIDGTDEKFTVFTTRPDTLFGASYCVLAPEHALVADITTAEQKEAVEAYINSVKMKSDLERTELAKEKTGVFTGAYAVNPVNGEKLPIWIADYVLATYGTGAVMAVPAHDERDYEFASTFNLPMKEVVKGGDITKEAYTGDGEHVNSAFLDGLNKEEAIAKMIEWLEVTSAGNQKVTYRLRDWLFSRQRYWGEPIPVIHWEDGTMTAVKEEELPLVLPKTDNIRPSGTGESPLANIDEWVNVVDPETGKKGRRETNTMPQWAGSCWYYLRYIDPNNSEALVDPEKVKQWLPVDIYIGGAEHAVLHLLYARFWHKVLYDIGVVPTKEPFQQLFNQGMILGENNEKMSKSKGNVVNPDDIVASHGADTLRLYEMFMGPLDASIAWSENGLDGARRFLDRVWRLFVQDNGELSEKITDAPNKELEKAYHQTVKKVTEDYAELRFNTAISQMMVFINDAYKAETLPKEYVEGFVKMIAPVAPHIGEELWSKLGYNETITYASWPTFDESKLVEDEVEIVVQVMGKVRAKLTMSKDASKEEMEQLALEAIKDQIEGKTVRKVIVVPGKLVNVVAN</sequence>